<evidence type="ECO:0000255" key="1">
    <source>
        <dbReference type="HAMAP-Rule" id="MF_00360"/>
    </source>
</evidence>
<evidence type="ECO:0000256" key="2">
    <source>
        <dbReference type="SAM" id="MobiDB-lite"/>
    </source>
</evidence>
<evidence type="ECO:0000305" key="3"/>
<comment type="function">
    <text evidence="1">Binds together with bS18 to 16S ribosomal RNA.</text>
</comment>
<comment type="similarity">
    <text evidence="1">Belongs to the bacterial ribosomal protein bS6 family.</text>
</comment>
<protein>
    <recommendedName>
        <fullName evidence="1">Small ribosomal subunit protein bS6</fullName>
    </recommendedName>
    <alternativeName>
        <fullName evidence="3">30S ribosomal protein S6</fullName>
    </alternativeName>
</protein>
<dbReference type="EMBL" id="AE017243">
    <property type="protein sequence ID" value="AAZ44378.1"/>
    <property type="molecule type" value="Genomic_DNA"/>
</dbReference>
<dbReference type="RefSeq" id="WP_011284064.1">
    <property type="nucleotide sequence ID" value="NC_007295.1"/>
</dbReference>
<dbReference type="SMR" id="Q4AA43"/>
<dbReference type="GeneID" id="41334597"/>
<dbReference type="KEGG" id="mhj:MHJ_0287"/>
<dbReference type="eggNOG" id="COG0360">
    <property type="taxonomic scope" value="Bacteria"/>
</dbReference>
<dbReference type="HOGENOM" id="CLU_1150863_0_0_14"/>
<dbReference type="OrthoDB" id="9812702at2"/>
<dbReference type="Proteomes" id="UP000000548">
    <property type="component" value="Chromosome"/>
</dbReference>
<dbReference type="GO" id="GO:1990904">
    <property type="term" value="C:ribonucleoprotein complex"/>
    <property type="evidence" value="ECO:0007669"/>
    <property type="project" value="UniProtKB-KW"/>
</dbReference>
<dbReference type="GO" id="GO:0005840">
    <property type="term" value="C:ribosome"/>
    <property type="evidence" value="ECO:0007669"/>
    <property type="project" value="UniProtKB-KW"/>
</dbReference>
<dbReference type="GO" id="GO:0019843">
    <property type="term" value="F:rRNA binding"/>
    <property type="evidence" value="ECO:0007669"/>
    <property type="project" value="UniProtKB-UniRule"/>
</dbReference>
<dbReference type="GO" id="GO:0003735">
    <property type="term" value="F:structural constituent of ribosome"/>
    <property type="evidence" value="ECO:0007669"/>
    <property type="project" value="InterPro"/>
</dbReference>
<dbReference type="GO" id="GO:0006412">
    <property type="term" value="P:translation"/>
    <property type="evidence" value="ECO:0007669"/>
    <property type="project" value="UniProtKB-UniRule"/>
</dbReference>
<dbReference type="CDD" id="cd00473">
    <property type="entry name" value="bS6"/>
    <property type="match status" value="1"/>
</dbReference>
<dbReference type="Gene3D" id="3.30.70.60">
    <property type="match status" value="1"/>
</dbReference>
<dbReference type="HAMAP" id="MF_00360">
    <property type="entry name" value="Ribosomal_bS6"/>
    <property type="match status" value="1"/>
</dbReference>
<dbReference type="InterPro" id="IPR000529">
    <property type="entry name" value="Ribosomal_bS6"/>
</dbReference>
<dbReference type="InterPro" id="IPR035980">
    <property type="entry name" value="Ribosomal_bS6_sf"/>
</dbReference>
<dbReference type="InterPro" id="IPR020814">
    <property type="entry name" value="Ribosomal_S6_plastid/chlpt"/>
</dbReference>
<dbReference type="InterPro" id="IPR014717">
    <property type="entry name" value="Transl_elong_EF1B/ribsomal_bS6"/>
</dbReference>
<dbReference type="NCBIfam" id="TIGR00166">
    <property type="entry name" value="S6"/>
    <property type="match status" value="1"/>
</dbReference>
<dbReference type="Pfam" id="PF01250">
    <property type="entry name" value="Ribosomal_S6"/>
    <property type="match status" value="1"/>
</dbReference>
<dbReference type="SUPFAM" id="SSF54995">
    <property type="entry name" value="Ribosomal protein S6"/>
    <property type="match status" value="1"/>
</dbReference>
<gene>
    <name evidence="1" type="primary">rpsF</name>
    <name type="ordered locus">MHJ_0287</name>
</gene>
<name>RS6_MESHJ</name>
<feature type="chain" id="PRO_0000229553" description="Small ribosomal subunit protein bS6">
    <location>
        <begin position="1"/>
        <end position="241"/>
    </location>
</feature>
<feature type="region of interest" description="Disordered" evidence="2">
    <location>
        <begin position="97"/>
        <end position="241"/>
    </location>
</feature>
<feature type="compositionally biased region" description="Basic residues" evidence="2">
    <location>
        <begin position="97"/>
        <end position="108"/>
    </location>
</feature>
<feature type="compositionally biased region" description="Basic and acidic residues" evidence="2">
    <location>
        <begin position="109"/>
        <end position="118"/>
    </location>
</feature>
<feature type="compositionally biased region" description="Low complexity" evidence="2">
    <location>
        <begin position="130"/>
        <end position="151"/>
    </location>
</feature>
<feature type="compositionally biased region" description="Low complexity" evidence="2">
    <location>
        <begin position="161"/>
        <end position="182"/>
    </location>
</feature>
<feature type="compositionally biased region" description="Basic and acidic residues" evidence="2">
    <location>
        <begin position="183"/>
        <end position="193"/>
    </location>
</feature>
<feature type="compositionally biased region" description="Low complexity" evidence="2">
    <location>
        <begin position="194"/>
        <end position="210"/>
    </location>
</feature>
<reference key="1">
    <citation type="journal article" date="2005" name="J. Bacteriol.">
        <title>Swine and poultry pathogens: the complete genome sequences of two strains of Mycoplasma hyopneumoniae and a strain of Mycoplasma synoviae.</title>
        <authorList>
            <person name="Vasconcelos A.T.R."/>
            <person name="Ferreira H.B."/>
            <person name="Bizarro C.V."/>
            <person name="Bonatto S.L."/>
            <person name="Carvalho M.O."/>
            <person name="Pinto P.M."/>
            <person name="Almeida D.F."/>
            <person name="Almeida L.G.P."/>
            <person name="Almeida R."/>
            <person name="Alves-Junior L."/>
            <person name="Assuncao E.N."/>
            <person name="Azevedo V.A.C."/>
            <person name="Bogo M.R."/>
            <person name="Brigido M.M."/>
            <person name="Brocchi M."/>
            <person name="Burity H.A."/>
            <person name="Camargo A.A."/>
            <person name="Camargo S.S."/>
            <person name="Carepo M.S."/>
            <person name="Carraro D.M."/>
            <person name="de Mattos Cascardo J.C."/>
            <person name="Castro L.A."/>
            <person name="Cavalcanti G."/>
            <person name="Chemale G."/>
            <person name="Collevatti R.G."/>
            <person name="Cunha C.W."/>
            <person name="Dallagiovanna B."/>
            <person name="Dambros B.P."/>
            <person name="Dellagostin O.A."/>
            <person name="Falcao C."/>
            <person name="Fantinatti-Garboggini F."/>
            <person name="Felipe M.S.S."/>
            <person name="Fiorentin L."/>
            <person name="Franco G.R."/>
            <person name="Freitas N.S.A."/>
            <person name="Frias D."/>
            <person name="Grangeiro T.B."/>
            <person name="Grisard E.C."/>
            <person name="Guimaraes C.T."/>
            <person name="Hungria M."/>
            <person name="Jardim S.N."/>
            <person name="Krieger M.A."/>
            <person name="Laurino J.P."/>
            <person name="Lima L.F.A."/>
            <person name="Lopes M.I."/>
            <person name="Loreto E.L.S."/>
            <person name="Madeira H.M.F."/>
            <person name="Manfio G.P."/>
            <person name="Maranhao A.Q."/>
            <person name="Martinkovics C.T."/>
            <person name="Medeiros S.R.B."/>
            <person name="Moreira M.A.M."/>
            <person name="Neiva M."/>
            <person name="Ramalho-Neto C.E."/>
            <person name="Nicolas M.F."/>
            <person name="Oliveira S.C."/>
            <person name="Paixao R.F.C."/>
            <person name="Pedrosa F.O."/>
            <person name="Pena S.D.J."/>
            <person name="Pereira M."/>
            <person name="Pereira-Ferrari L."/>
            <person name="Piffer I."/>
            <person name="Pinto L.S."/>
            <person name="Potrich D.P."/>
            <person name="Salim A.C.M."/>
            <person name="Santos F.R."/>
            <person name="Schmitt R."/>
            <person name="Schneider M.P.C."/>
            <person name="Schrank A."/>
            <person name="Schrank I.S."/>
            <person name="Schuck A.F."/>
            <person name="Seuanez H.N."/>
            <person name="Silva D.W."/>
            <person name="Silva R."/>
            <person name="Silva S.C."/>
            <person name="Soares C.M.A."/>
            <person name="Souza K.R.L."/>
            <person name="Souza R.C."/>
            <person name="Staats C.C."/>
            <person name="Steffens M.B.R."/>
            <person name="Teixeira S.M.R."/>
            <person name="Urmenyi T.P."/>
            <person name="Vainstein M.H."/>
            <person name="Zuccherato L.W."/>
            <person name="Simpson A.J.G."/>
            <person name="Zaha A."/>
        </authorList>
    </citation>
    <scope>NUCLEOTIDE SEQUENCE [LARGE SCALE GENOMIC DNA]</scope>
    <source>
        <strain>J / ATCC 25934 / NCTC 10110</strain>
    </source>
</reference>
<sequence>MPKYEIMTILDPKAEMAIIDNLLKTVFGDNSTEKLRKLETTNLAYSIRKSKIAQYFLVDLNAPTNLIEEFVRRANITREIWRYLIVNLDSEKGLNKKPKIRERNRKYTLRRDRFDKPNFRGNPKSRFDQQDQQATKNQQNFQQNQQNQASQYRENSRQNQDDFQQVSSNQQNFGQNQQNQSGYHRENNRHNQENMHQNNKNHQNQTSQTQRNRRQYQPIKNPKFNQKEKENYNNKKPQSSN</sequence>
<accession>Q4AA43</accession>
<proteinExistence type="inferred from homology"/>
<organism>
    <name type="scientific">Mesomycoplasma hyopneumoniae (strain J / ATCC 25934 / NCTC 10110)</name>
    <name type="common">Mycoplasma hyopneumoniae</name>
    <dbReference type="NCBI Taxonomy" id="262719"/>
    <lineage>
        <taxon>Bacteria</taxon>
        <taxon>Bacillati</taxon>
        <taxon>Mycoplasmatota</taxon>
        <taxon>Mycoplasmoidales</taxon>
        <taxon>Metamycoplasmataceae</taxon>
        <taxon>Mesomycoplasma</taxon>
    </lineage>
</organism>
<keyword id="KW-0687">Ribonucleoprotein</keyword>
<keyword id="KW-0689">Ribosomal protein</keyword>
<keyword id="KW-0694">RNA-binding</keyword>
<keyword id="KW-0699">rRNA-binding</keyword>